<proteinExistence type="evidence at protein level"/>
<sequence length="228" mass="26210">MASEELQKDLEEVKVLLEKATRKRVRDALTAEKSKIETEIKNKMQQKSQKKAELLDNEKPAAVVAPITTGYTVKISNYGWDQSDKFVKIYITLTGVHQVPTENVQVHFTERSFDLLVKNLNGKSYSMIVNNLLKPISVEGSSKKVKTDTVLILCRKKVENTRWDYLTQVEKECKEKEKPSYDTETDPSEGLMNVLKKIYEDGDDDMKRTINKAWVESREKQAKGDTEF</sequence>
<evidence type="ECO:0000250" key="1"/>
<evidence type="ECO:0000255" key="2">
    <source>
        <dbReference type="PROSITE-ProRule" id="PRU00386"/>
    </source>
</evidence>
<evidence type="ECO:0000255" key="3">
    <source>
        <dbReference type="PROSITE-ProRule" id="PRU00547"/>
    </source>
</evidence>
<evidence type="ECO:0000269" key="4">
    <source>
    </source>
</evidence>
<evidence type="ECO:0000269" key="5">
    <source>
    </source>
</evidence>
<evidence type="ECO:0000269" key="6">
    <source>
    </source>
</evidence>
<evidence type="ECO:0000269" key="7">
    <source>
    </source>
</evidence>
<evidence type="ECO:0000269" key="8">
    <source ref="10"/>
</evidence>
<evidence type="ECO:0000269" key="9">
    <source ref="11"/>
</evidence>
<evidence type="ECO:0000303" key="10">
    <source>
    </source>
</evidence>
<evidence type="ECO:0000305" key="11"/>
<evidence type="ECO:0007744" key="12">
    <source>
    </source>
</evidence>
<evidence type="ECO:0007744" key="13">
    <source>
    </source>
</evidence>
<evidence type="ECO:0007744" key="14">
    <source>
    </source>
</evidence>
<evidence type="ECO:0007744" key="15">
    <source>
    </source>
</evidence>
<evidence type="ECO:0007744" key="16">
    <source>
    </source>
</evidence>
<evidence type="ECO:0007744" key="17">
    <source>
    </source>
</evidence>
<evidence type="ECO:0007829" key="18">
    <source>
        <dbReference type="PDB" id="1X5M"/>
    </source>
</evidence>
<evidence type="ECO:0007829" key="19">
    <source>
        <dbReference type="PDB" id="2A25"/>
    </source>
</evidence>
<evidence type="ECO:0007829" key="20">
    <source>
        <dbReference type="PDB" id="2A26"/>
    </source>
</evidence>
<accession>Q9HB71</accession>
<accession>B2ZWH2</accession>
<accession>B3KSF1</accession>
<accession>O60666</accession>
<accession>Q5R370</accession>
<accession>Q5R371</accession>
<organism>
    <name type="scientific">Homo sapiens</name>
    <name type="common">Human</name>
    <dbReference type="NCBI Taxonomy" id="9606"/>
    <lineage>
        <taxon>Eukaryota</taxon>
        <taxon>Metazoa</taxon>
        <taxon>Chordata</taxon>
        <taxon>Craniata</taxon>
        <taxon>Vertebrata</taxon>
        <taxon>Euteleostomi</taxon>
        <taxon>Mammalia</taxon>
        <taxon>Eutheria</taxon>
        <taxon>Euarchontoglires</taxon>
        <taxon>Primates</taxon>
        <taxon>Haplorrhini</taxon>
        <taxon>Catarrhini</taxon>
        <taxon>Hominidae</taxon>
        <taxon>Homo</taxon>
    </lineage>
</organism>
<dbReference type="EMBL" id="AF057356">
    <property type="protein sequence ID" value="AAC21458.1"/>
    <property type="molecule type" value="mRNA"/>
</dbReference>
<dbReference type="EMBL" id="AF314752">
    <property type="protein sequence ID" value="AAG34170.1"/>
    <property type="molecule type" value="mRNA"/>
</dbReference>
<dbReference type="EMBL" id="AL035305">
    <property type="protein sequence ID" value="CAA22910.1"/>
    <property type="molecule type" value="mRNA"/>
</dbReference>
<dbReference type="EMBL" id="AF275803">
    <property type="protein sequence ID" value="AAG23817.1"/>
    <property type="status" value="ALT_FRAME"/>
    <property type="molecule type" value="mRNA"/>
</dbReference>
<dbReference type="EMBL" id="AY423723">
    <property type="protein sequence ID" value="AAS00486.1"/>
    <property type="molecule type" value="mRNA"/>
</dbReference>
<dbReference type="EMBL" id="AK093425">
    <property type="protein sequence ID" value="BAG52713.1"/>
    <property type="status" value="ALT_FRAME"/>
    <property type="molecule type" value="mRNA"/>
</dbReference>
<dbReference type="EMBL" id="AK313278">
    <property type="protein sequence ID" value="BAG36086.1"/>
    <property type="molecule type" value="mRNA"/>
</dbReference>
<dbReference type="EMBL" id="Z99127">
    <property type="status" value="NOT_ANNOTATED_CDS"/>
    <property type="molecule type" value="Genomic_DNA"/>
</dbReference>
<dbReference type="EMBL" id="CH471067">
    <property type="protein sequence ID" value="EAW90982.1"/>
    <property type="molecule type" value="Genomic_DNA"/>
</dbReference>
<dbReference type="EMBL" id="BC005975">
    <property type="protein sequence ID" value="AAH05975.1"/>
    <property type="molecule type" value="mRNA"/>
</dbReference>
<dbReference type="EMBL" id="BC022352">
    <property type="protein sequence ID" value="AAH22352.1"/>
    <property type="molecule type" value="mRNA"/>
</dbReference>
<dbReference type="EMBL" id="BC078151">
    <property type="protein sequence ID" value="AAH78151.1"/>
    <property type="molecule type" value="mRNA"/>
</dbReference>
<dbReference type="CCDS" id="CCDS1315.1">
    <molecule id="Q9HB71-1"/>
</dbReference>
<dbReference type="CCDS" id="CCDS30942.1">
    <molecule id="Q9HB71-3"/>
</dbReference>
<dbReference type="RefSeq" id="NP_001007215.1">
    <molecule id="Q9HB71-3"/>
    <property type="nucleotide sequence ID" value="NM_001007214.1"/>
</dbReference>
<dbReference type="RefSeq" id="NP_055227.1">
    <molecule id="Q9HB71-1"/>
    <property type="nucleotide sequence ID" value="NM_014412.3"/>
</dbReference>
<dbReference type="RefSeq" id="XP_016856535.1">
    <property type="nucleotide sequence ID" value="XM_017001046.1"/>
</dbReference>
<dbReference type="PDB" id="1X5M">
    <property type="method" value="NMR"/>
    <property type="chains" value="A=63-176"/>
</dbReference>
<dbReference type="PDB" id="2A25">
    <property type="method" value="X-ray"/>
    <property type="resolution" value="2.20 A"/>
    <property type="chains" value="B=58-70"/>
</dbReference>
<dbReference type="PDB" id="2A26">
    <property type="method" value="X-ray"/>
    <property type="resolution" value="1.20 A"/>
    <property type="chains" value="A/B/C=1-47"/>
</dbReference>
<dbReference type="PDBsum" id="1X5M"/>
<dbReference type="PDBsum" id="2A25"/>
<dbReference type="PDBsum" id="2A26"/>
<dbReference type="SMR" id="Q9HB71"/>
<dbReference type="BioGRID" id="118001">
    <property type="interactions" value="282"/>
</dbReference>
<dbReference type="CORUM" id="Q9HB71"/>
<dbReference type="ELM" id="Q9HB71"/>
<dbReference type="FunCoup" id="Q9HB71">
    <property type="interactions" value="2964"/>
</dbReference>
<dbReference type="IntAct" id="Q9HB71">
    <property type="interactions" value="171"/>
</dbReference>
<dbReference type="MINT" id="Q9HB71"/>
<dbReference type="STRING" id="9606.ENSP00000356652"/>
<dbReference type="ChEMBL" id="CHEMBL4295948"/>
<dbReference type="GlyGen" id="Q9HB71">
    <property type="glycosylation" value="1 site, 1 O-linked glycan (1 site)"/>
</dbReference>
<dbReference type="iPTMnet" id="Q9HB71"/>
<dbReference type="MetOSite" id="Q9HB71"/>
<dbReference type="PhosphoSitePlus" id="Q9HB71"/>
<dbReference type="SwissPalm" id="Q9HB71"/>
<dbReference type="BioMuta" id="CACYBP"/>
<dbReference type="DMDM" id="46576651"/>
<dbReference type="CPTAC" id="CPTAC-321"/>
<dbReference type="CPTAC" id="CPTAC-322"/>
<dbReference type="jPOST" id="Q9HB71"/>
<dbReference type="MassIVE" id="Q9HB71"/>
<dbReference type="PaxDb" id="9606-ENSP00000356652"/>
<dbReference type="PeptideAtlas" id="Q9HB71"/>
<dbReference type="ProteomicsDB" id="3636"/>
<dbReference type="ProteomicsDB" id="63708"/>
<dbReference type="ProteomicsDB" id="81499">
    <molecule id="Q9HB71-1"/>
</dbReference>
<dbReference type="ProteomicsDB" id="81500">
    <molecule id="Q9HB71-2"/>
</dbReference>
<dbReference type="Pumba" id="Q9HB71"/>
<dbReference type="TopDownProteomics" id="Q9HB71-1">
    <molecule id="Q9HB71-1"/>
</dbReference>
<dbReference type="Antibodypedia" id="20569">
    <property type="antibodies" value="377 antibodies from 35 providers"/>
</dbReference>
<dbReference type="DNASU" id="27101"/>
<dbReference type="Ensembl" id="ENST00000367679.7">
    <molecule id="Q9HB71-1"/>
    <property type="protein sequence ID" value="ENSP00000356652.2"/>
    <property type="gene ID" value="ENSG00000116161.18"/>
</dbReference>
<dbReference type="Ensembl" id="ENST00000405362.1">
    <molecule id="Q9HB71-3"/>
    <property type="protein sequence ID" value="ENSP00000385771.1"/>
    <property type="gene ID" value="ENSG00000116161.18"/>
</dbReference>
<dbReference type="Ensembl" id="ENST00000406752.1">
    <molecule id="Q9HB71-2"/>
    <property type="protein sequence ID" value="ENSP00000384139.1"/>
    <property type="gene ID" value="ENSG00000116161.18"/>
</dbReference>
<dbReference type="Ensembl" id="ENST00000613570.4">
    <molecule id="Q9HB71-3"/>
    <property type="protein sequence ID" value="ENSP00000479414.1"/>
    <property type="gene ID" value="ENSG00000116161.18"/>
</dbReference>
<dbReference type="GeneID" id="27101"/>
<dbReference type="KEGG" id="hsa:27101"/>
<dbReference type="MANE-Select" id="ENST00000367679.7">
    <property type="protein sequence ID" value="ENSP00000356652.2"/>
    <property type="RefSeq nucleotide sequence ID" value="NM_014412.3"/>
    <property type="RefSeq protein sequence ID" value="NP_055227.1"/>
</dbReference>
<dbReference type="UCSC" id="uc001gki.2">
    <molecule id="Q9HB71-1"/>
    <property type="organism name" value="human"/>
</dbReference>
<dbReference type="AGR" id="HGNC:30423"/>
<dbReference type="CTD" id="27101"/>
<dbReference type="DisGeNET" id="27101"/>
<dbReference type="GeneCards" id="CACYBP"/>
<dbReference type="HGNC" id="HGNC:30423">
    <property type="gene designation" value="CACYBP"/>
</dbReference>
<dbReference type="HPA" id="ENSG00000116161">
    <property type="expression patterns" value="Low tissue specificity"/>
</dbReference>
<dbReference type="MIM" id="606186">
    <property type="type" value="gene"/>
</dbReference>
<dbReference type="neXtProt" id="NX_Q9HB71"/>
<dbReference type="OpenTargets" id="ENSG00000116161"/>
<dbReference type="PharmGKB" id="PA134894213"/>
<dbReference type="VEuPathDB" id="HostDB:ENSG00000116161"/>
<dbReference type="eggNOG" id="KOG3260">
    <property type="taxonomic scope" value="Eukaryota"/>
</dbReference>
<dbReference type="GeneTree" id="ENSGT00390000016470"/>
<dbReference type="HOGENOM" id="CLU_081441_2_0_1"/>
<dbReference type="InParanoid" id="Q9HB71"/>
<dbReference type="OMA" id="YGWDQSA"/>
<dbReference type="OrthoDB" id="164025at2759"/>
<dbReference type="PAN-GO" id="Q9HB71">
    <property type="GO annotations" value="2 GO annotations based on evolutionary models"/>
</dbReference>
<dbReference type="PhylomeDB" id="Q9HB71"/>
<dbReference type="TreeFam" id="TF323891"/>
<dbReference type="PathwayCommons" id="Q9HB71"/>
<dbReference type="SignaLink" id="Q9HB71"/>
<dbReference type="BioGRID-ORCS" id="27101">
    <property type="hits" value="37 hits in 1121 CRISPR screens"/>
</dbReference>
<dbReference type="CD-CODE" id="91857CE7">
    <property type="entry name" value="Nucleolus"/>
</dbReference>
<dbReference type="CD-CODE" id="FB4E32DD">
    <property type="entry name" value="Presynaptic clusters and postsynaptic densities"/>
</dbReference>
<dbReference type="ChiTaRS" id="CACYBP">
    <property type="organism name" value="human"/>
</dbReference>
<dbReference type="EvolutionaryTrace" id="Q9HB71"/>
<dbReference type="GeneWiki" id="CACYBP"/>
<dbReference type="GenomeRNAi" id="27101"/>
<dbReference type="Pharos" id="Q9HB71">
    <property type="development level" value="Tbio"/>
</dbReference>
<dbReference type="PRO" id="PR:Q9HB71"/>
<dbReference type="Proteomes" id="UP000005640">
    <property type="component" value="Chromosome 1"/>
</dbReference>
<dbReference type="RNAct" id="Q9HB71">
    <property type="molecule type" value="protein"/>
</dbReference>
<dbReference type="Bgee" id="ENSG00000116161">
    <property type="expression patterns" value="Expressed in endothelial cell and 218 other cell types or tissues"/>
</dbReference>
<dbReference type="ExpressionAtlas" id="Q9HB71">
    <property type="expression patterns" value="baseline and differential"/>
</dbReference>
<dbReference type="GO" id="GO:0030877">
    <property type="term" value="C:beta-catenin destruction complex"/>
    <property type="evidence" value="ECO:0000314"/>
    <property type="project" value="UniProtKB"/>
</dbReference>
<dbReference type="GO" id="GO:0044297">
    <property type="term" value="C:cell body"/>
    <property type="evidence" value="ECO:0007669"/>
    <property type="project" value="Ensembl"/>
</dbReference>
<dbReference type="GO" id="GO:0005829">
    <property type="term" value="C:cytosol"/>
    <property type="evidence" value="ECO:0000314"/>
    <property type="project" value="HPA"/>
</dbReference>
<dbReference type="GO" id="GO:0070062">
    <property type="term" value="C:extracellular exosome"/>
    <property type="evidence" value="ECO:0007005"/>
    <property type="project" value="UniProtKB"/>
</dbReference>
<dbReference type="GO" id="GO:0005641">
    <property type="term" value="C:nuclear envelope lumen"/>
    <property type="evidence" value="ECO:0007669"/>
    <property type="project" value="Ensembl"/>
</dbReference>
<dbReference type="GO" id="GO:0005654">
    <property type="term" value="C:nucleoplasm"/>
    <property type="evidence" value="ECO:0000314"/>
    <property type="project" value="HPA"/>
</dbReference>
<dbReference type="GO" id="GO:0005634">
    <property type="term" value="C:nucleus"/>
    <property type="evidence" value="ECO:0000318"/>
    <property type="project" value="GO_Central"/>
</dbReference>
<dbReference type="GO" id="GO:0019005">
    <property type="term" value="C:SCF ubiquitin ligase complex"/>
    <property type="evidence" value="ECO:0007669"/>
    <property type="project" value="Ensembl"/>
</dbReference>
<dbReference type="GO" id="GO:0019904">
    <property type="term" value="F:protein domain specific binding"/>
    <property type="evidence" value="ECO:0007669"/>
    <property type="project" value="Ensembl"/>
</dbReference>
<dbReference type="GO" id="GO:0042803">
    <property type="term" value="F:protein homodimerization activity"/>
    <property type="evidence" value="ECO:0000353"/>
    <property type="project" value="UniProtKB"/>
</dbReference>
<dbReference type="GO" id="GO:0044548">
    <property type="term" value="F:S100 protein binding"/>
    <property type="evidence" value="ECO:0007669"/>
    <property type="project" value="InterPro"/>
</dbReference>
<dbReference type="GO" id="GO:0015631">
    <property type="term" value="F:tubulin binding"/>
    <property type="evidence" value="ECO:0007669"/>
    <property type="project" value="InterPro"/>
</dbReference>
<dbReference type="GO" id="GO:0031625">
    <property type="term" value="F:ubiquitin protein ligase binding"/>
    <property type="evidence" value="ECO:0007669"/>
    <property type="project" value="Ensembl"/>
</dbReference>
<dbReference type="GO" id="GO:0055007">
    <property type="term" value="P:cardiac muscle cell differentiation"/>
    <property type="evidence" value="ECO:0007669"/>
    <property type="project" value="Ensembl"/>
</dbReference>
<dbReference type="GO" id="GO:0071277">
    <property type="term" value="P:cellular response to calcium ion"/>
    <property type="evidence" value="ECO:0007669"/>
    <property type="project" value="Ensembl"/>
</dbReference>
<dbReference type="GO" id="GO:1990830">
    <property type="term" value="P:cellular response to leukemia inhibitory factor"/>
    <property type="evidence" value="ECO:0007669"/>
    <property type="project" value="Ensembl"/>
</dbReference>
<dbReference type="GO" id="GO:0007507">
    <property type="term" value="P:heart development"/>
    <property type="evidence" value="ECO:0000318"/>
    <property type="project" value="GO_Central"/>
</dbReference>
<dbReference type="GO" id="GO:0045740">
    <property type="term" value="P:positive regulation of DNA replication"/>
    <property type="evidence" value="ECO:0007669"/>
    <property type="project" value="Ensembl"/>
</dbReference>
<dbReference type="GO" id="GO:0060416">
    <property type="term" value="P:response to growth hormone"/>
    <property type="evidence" value="ECO:0007669"/>
    <property type="project" value="Ensembl"/>
</dbReference>
<dbReference type="CDD" id="cd06468">
    <property type="entry name" value="p23_CacyBP"/>
    <property type="match status" value="1"/>
</dbReference>
<dbReference type="DisProt" id="DP00907">
    <molecule id="Q9HB71-2"/>
</dbReference>
<dbReference type="FunFam" id="2.60.40.790:FF:000006">
    <property type="entry name" value="calcyclin-binding protein-like"/>
    <property type="match status" value="1"/>
</dbReference>
<dbReference type="FunFam" id="4.10.860.10:FF:000006">
    <property type="entry name" value="calcyclin-binding protein-like"/>
    <property type="match status" value="1"/>
</dbReference>
<dbReference type="Gene3D" id="2.60.40.790">
    <property type="match status" value="1"/>
</dbReference>
<dbReference type="Gene3D" id="4.10.860.10">
    <property type="entry name" value="UVR domain"/>
    <property type="match status" value="1"/>
</dbReference>
<dbReference type="IDEAL" id="IID00125"/>
<dbReference type="InterPro" id="IPR037201">
    <property type="entry name" value="CacyBP_N"/>
</dbReference>
<dbReference type="InterPro" id="IPR052289">
    <property type="entry name" value="Calcyclin-binding_UBL-bridge"/>
</dbReference>
<dbReference type="InterPro" id="IPR037893">
    <property type="entry name" value="CS_CacyBP"/>
</dbReference>
<dbReference type="InterPro" id="IPR007052">
    <property type="entry name" value="CS_dom"/>
</dbReference>
<dbReference type="InterPro" id="IPR008978">
    <property type="entry name" value="HSP20-like_chaperone"/>
</dbReference>
<dbReference type="InterPro" id="IPR007699">
    <property type="entry name" value="SGS_dom"/>
</dbReference>
<dbReference type="InterPro" id="IPR015120">
    <property type="entry name" value="Siah-Interact_N"/>
</dbReference>
<dbReference type="PANTHER" id="PTHR13164:SF3">
    <property type="entry name" value="CALCYCLIN-BINDING PROTEIN"/>
    <property type="match status" value="1"/>
</dbReference>
<dbReference type="PANTHER" id="PTHR13164">
    <property type="entry name" value="CALICYLIN BINDING PROTEIN"/>
    <property type="match status" value="1"/>
</dbReference>
<dbReference type="Pfam" id="PF04969">
    <property type="entry name" value="CS"/>
    <property type="match status" value="1"/>
</dbReference>
<dbReference type="Pfam" id="PF05002">
    <property type="entry name" value="SGS"/>
    <property type="match status" value="1"/>
</dbReference>
<dbReference type="Pfam" id="PF09032">
    <property type="entry name" value="Siah-Interact_N"/>
    <property type="match status" value="1"/>
</dbReference>
<dbReference type="SUPFAM" id="SSF140106">
    <property type="entry name" value="Calcyclin-binding protein-like"/>
    <property type="match status" value="1"/>
</dbReference>
<dbReference type="SUPFAM" id="SSF49764">
    <property type="entry name" value="HSP20-like chaperones"/>
    <property type="match status" value="1"/>
</dbReference>
<dbReference type="PROSITE" id="PS51203">
    <property type="entry name" value="CS"/>
    <property type="match status" value="1"/>
</dbReference>
<dbReference type="PROSITE" id="PS51048">
    <property type="entry name" value="SGS"/>
    <property type="match status" value="1"/>
</dbReference>
<feature type="initiator methionine" description="Removed" evidence="7 8 9 12 14 15 17">
    <location>
        <position position="1"/>
    </location>
</feature>
<feature type="chain" id="PRO_0000185389" description="Calcyclin-binding protein">
    <location>
        <begin position="2"/>
        <end position="228"/>
    </location>
</feature>
<feature type="domain" description="CS" evidence="3">
    <location>
        <begin position="73"/>
        <end position="167"/>
    </location>
</feature>
<feature type="domain" description="SGS" evidence="2">
    <location>
        <begin position="168"/>
        <end position="228"/>
    </location>
</feature>
<feature type="region of interest" description="Interaction with SIAH1">
    <location>
        <begin position="2"/>
        <end position="80"/>
    </location>
</feature>
<feature type="region of interest" description="Interaction with SKP1" evidence="4">
    <location>
        <begin position="73"/>
        <end position="228"/>
    </location>
</feature>
<feature type="region of interest" description="Interaction with S100A6" evidence="1">
    <location>
        <begin position="154"/>
        <end position="228"/>
    </location>
</feature>
<feature type="modified residue" description="N-acetylalanine" evidence="7 8 9 12 14 15 17">
    <location>
        <position position="2"/>
    </location>
</feature>
<feature type="modified residue" description="Phosphoserine" evidence="16">
    <location>
        <position position="3"/>
    </location>
</feature>
<feature type="modified residue" description="N6-acetyllysine" evidence="13">
    <location>
        <position position="8"/>
    </location>
</feature>
<feature type="modified residue" description="N6-acetyllysine" evidence="13">
    <location>
        <position position="19"/>
    </location>
</feature>
<feature type="modified residue" description="Phosphoserine" evidence="16">
    <location>
        <position position="34"/>
    </location>
</feature>
<feature type="modified residue" description="N6-acetyllysine" evidence="13">
    <location>
        <position position="85"/>
    </location>
</feature>
<feature type="modified residue" description="N6-acetyllysine" evidence="13">
    <location>
        <position position="118"/>
    </location>
</feature>
<feature type="splice variant" id="VSP_046862" description="In isoform 3." evidence="10">
    <location>
        <begin position="1"/>
        <end position="43"/>
    </location>
</feature>
<feature type="splice variant" id="VSP_010171" description="In isoform 2." evidence="11">
    <original>VKISNYGW</original>
    <variation>DGISQISL</variation>
    <location>
        <begin position="73"/>
        <end position="80"/>
    </location>
</feature>
<feature type="splice variant" id="VSP_010172" description="In isoform 2." evidence="11">
    <location>
        <begin position="81"/>
        <end position="228"/>
    </location>
</feature>
<feature type="mutagenesis site" description="Abolishes interaction with SIAH1." evidence="6">
    <original>KRVR</original>
    <variation>AAVA</variation>
    <location>
        <begin position="23"/>
        <end position="26"/>
    </location>
</feature>
<feature type="mutagenesis site" description="Abolishes interaction with SIAH1; when associated with N-66." evidence="6">
    <original>V</original>
    <variation>N</variation>
    <location>
        <position position="64"/>
    </location>
</feature>
<feature type="mutagenesis site" description="Abolishes interaction with SIAH1; when associated with N-64." evidence="6">
    <original>P</original>
    <variation>N</variation>
    <location>
        <position position="66"/>
    </location>
</feature>
<feature type="sequence conflict" description="In Ref. 4; AAG23817." evidence="11" ref="4">
    <original>M</original>
    <variation>V</variation>
    <location>
        <position position="44"/>
    </location>
</feature>
<feature type="sequence conflict" description="In Ref. 4; AAG23817." evidence="11" ref="4">
    <original>E</original>
    <variation>K</variation>
    <location>
        <position position="177"/>
    </location>
</feature>
<feature type="sequence conflict" description="In Ref. 4; AAG23817." evidence="11" ref="4">
    <original>T</original>
    <variation>P</variation>
    <location>
        <position position="183"/>
    </location>
</feature>
<feature type="sequence conflict" description="In Ref. 4; AAG23817." evidence="11" ref="4">
    <original>T</original>
    <variation>P</variation>
    <location>
        <position position="226"/>
    </location>
</feature>
<feature type="helix" evidence="20">
    <location>
        <begin position="3"/>
        <end position="19"/>
    </location>
</feature>
<feature type="helix" evidence="20">
    <location>
        <begin position="23"/>
        <end position="46"/>
    </location>
</feature>
<feature type="strand" evidence="19">
    <location>
        <begin position="61"/>
        <end position="64"/>
    </location>
</feature>
<feature type="strand" evidence="18">
    <location>
        <begin position="79"/>
        <end position="83"/>
    </location>
</feature>
<feature type="strand" evidence="18">
    <location>
        <begin position="86"/>
        <end position="92"/>
    </location>
</feature>
<feature type="turn" evidence="18">
    <location>
        <begin position="94"/>
        <end position="98"/>
    </location>
</feature>
<feature type="strand" evidence="18">
    <location>
        <begin position="103"/>
        <end position="108"/>
    </location>
</feature>
<feature type="strand" evidence="18">
    <location>
        <begin position="110"/>
        <end position="117"/>
    </location>
</feature>
<feature type="strand" evidence="18">
    <location>
        <begin position="121"/>
        <end position="123"/>
    </location>
</feature>
<feature type="strand" evidence="18">
    <location>
        <begin position="125"/>
        <end position="130"/>
    </location>
</feature>
<feature type="strand" evidence="18">
    <location>
        <begin position="132"/>
        <end position="134"/>
    </location>
</feature>
<feature type="turn" evidence="18">
    <location>
        <begin position="138"/>
        <end position="140"/>
    </location>
</feature>
<feature type="strand" evidence="18">
    <location>
        <begin position="142"/>
        <end position="146"/>
    </location>
</feature>
<feature type="strand" evidence="18">
    <location>
        <begin position="149"/>
        <end position="155"/>
    </location>
</feature>
<feature type="strand" evidence="18">
    <location>
        <begin position="157"/>
        <end position="160"/>
    </location>
</feature>
<feature type="strand" evidence="18">
    <location>
        <begin position="164"/>
        <end position="167"/>
    </location>
</feature>
<feature type="helix" evidence="18">
    <location>
        <begin position="168"/>
        <end position="174"/>
    </location>
</feature>
<feature type="modified residue" description="N-acetylmethionine" evidence="7">
    <location sequence="Q9HB71-3">
        <position position="1"/>
    </location>
</feature>
<gene>
    <name type="primary">CACYBP</name>
    <name type="synonym">S100A6BP</name>
    <name type="synonym">SIP</name>
    <name type="ORF">PNAS-107</name>
</gene>
<reference key="1">
    <citation type="journal article" date="2002" name="Sheng Wu Hua Xue Yu Sheng Wu Wu Li Xue Bao">
        <title>Cloning and expression of human calcyclin binding protein (hCacyBP) gene.</title>
        <authorList>
            <person name="Liu W.X."/>
            <person name="Wu J."/>
            <person name="Zhao Z."/>
            <person name="Zhou Y."/>
            <person name="Peng X.Z."/>
            <person name="Yuan J.G."/>
            <person name="Qiang B.Q."/>
        </authorList>
    </citation>
    <scope>NUCLEOTIDE SEQUENCE [MRNA] (ISOFORM 1)</scope>
    <source>
        <tissue>Liver</tissue>
    </source>
</reference>
<reference key="2">
    <citation type="submission" date="2000-10" db="EMBL/GenBank/DDBJ databases">
        <title>Amplification and overexpression of the gene encoding the human calcyclin binding protein on chromosome 1q24-q25 in advanced lung carcinomas.</title>
        <authorList>
            <person name="Petersen S."/>
            <person name="Schluens K."/>
            <person name="Dietel M."/>
            <person name="Petersen I."/>
        </authorList>
    </citation>
    <scope>NUCLEOTIDE SEQUENCE [MRNA] (ISOFORM 1)</scope>
</reference>
<reference key="3">
    <citation type="submission" date="1999-01" db="EMBL/GenBank/DDBJ databases">
        <authorList>
            <person name="Rhodes S."/>
        </authorList>
    </citation>
    <scope>NUCLEOTIDE SEQUENCE [LARGE SCALE MRNA] (ISOFORM 1)</scope>
</reference>
<reference key="4">
    <citation type="submission" date="2000-06" db="EMBL/GenBank/DDBJ databases">
        <title>Human acute promyelocytic leukemia cell line NB4's apoptosis related genes.</title>
        <authorList>
            <person name="Yu W.-Q."/>
            <person name="Sun B.-Z."/>
            <person name="Chai Y.-B."/>
            <person name="Zhu F."/>
            <person name="Liu X.-S."/>
            <person name="Li Z."/>
            <person name="Lu F."/>
            <person name="Yan W."/>
            <person name="Yang H."/>
            <person name="Zhao Z.-L."/>
        </authorList>
    </citation>
    <scope>NUCLEOTIDE SEQUENCE [LARGE SCALE MRNA]</scope>
    <source>
        <tissue>Promyelocytic leukemia</tissue>
    </source>
</reference>
<reference key="5">
    <citation type="submission" date="2003-09" db="EMBL/GenBank/DDBJ databases">
        <title>Identification of a human growth inhibition gene 5 (GIG5).</title>
        <authorList>
            <person name="Kim J.W."/>
        </authorList>
    </citation>
    <scope>NUCLEOTIDE SEQUENCE [LARGE SCALE MRNA] (ISOFORM 1)</scope>
</reference>
<reference key="6">
    <citation type="journal article" date="2004" name="Nat. Genet.">
        <title>Complete sequencing and characterization of 21,243 full-length human cDNAs.</title>
        <authorList>
            <person name="Ota T."/>
            <person name="Suzuki Y."/>
            <person name="Nishikawa T."/>
            <person name="Otsuki T."/>
            <person name="Sugiyama T."/>
            <person name="Irie R."/>
            <person name="Wakamatsu A."/>
            <person name="Hayashi K."/>
            <person name="Sato H."/>
            <person name="Nagai K."/>
            <person name="Kimura K."/>
            <person name="Makita H."/>
            <person name="Sekine M."/>
            <person name="Obayashi M."/>
            <person name="Nishi T."/>
            <person name="Shibahara T."/>
            <person name="Tanaka T."/>
            <person name="Ishii S."/>
            <person name="Yamamoto J."/>
            <person name="Saito K."/>
            <person name="Kawai Y."/>
            <person name="Isono Y."/>
            <person name="Nakamura Y."/>
            <person name="Nagahari K."/>
            <person name="Murakami K."/>
            <person name="Yasuda T."/>
            <person name="Iwayanagi T."/>
            <person name="Wagatsuma M."/>
            <person name="Shiratori A."/>
            <person name="Sudo H."/>
            <person name="Hosoiri T."/>
            <person name="Kaku Y."/>
            <person name="Kodaira H."/>
            <person name="Kondo H."/>
            <person name="Sugawara M."/>
            <person name="Takahashi M."/>
            <person name="Kanda K."/>
            <person name="Yokoi T."/>
            <person name="Furuya T."/>
            <person name="Kikkawa E."/>
            <person name="Omura Y."/>
            <person name="Abe K."/>
            <person name="Kamihara K."/>
            <person name="Katsuta N."/>
            <person name="Sato K."/>
            <person name="Tanikawa M."/>
            <person name="Yamazaki M."/>
            <person name="Ninomiya K."/>
            <person name="Ishibashi T."/>
            <person name="Yamashita H."/>
            <person name="Murakawa K."/>
            <person name="Fujimori K."/>
            <person name="Tanai H."/>
            <person name="Kimata M."/>
            <person name="Watanabe M."/>
            <person name="Hiraoka S."/>
            <person name="Chiba Y."/>
            <person name="Ishida S."/>
            <person name="Ono Y."/>
            <person name="Takiguchi S."/>
            <person name="Watanabe S."/>
            <person name="Yosida M."/>
            <person name="Hotuta T."/>
            <person name="Kusano J."/>
            <person name="Kanehori K."/>
            <person name="Takahashi-Fujii A."/>
            <person name="Hara H."/>
            <person name="Tanase T.-O."/>
            <person name="Nomura Y."/>
            <person name="Togiya S."/>
            <person name="Komai F."/>
            <person name="Hara R."/>
            <person name="Takeuchi K."/>
            <person name="Arita M."/>
            <person name="Imose N."/>
            <person name="Musashino K."/>
            <person name="Yuuki H."/>
            <person name="Oshima A."/>
            <person name="Sasaki N."/>
            <person name="Aotsuka S."/>
            <person name="Yoshikawa Y."/>
            <person name="Matsunawa H."/>
            <person name="Ichihara T."/>
            <person name="Shiohata N."/>
            <person name="Sano S."/>
            <person name="Moriya S."/>
            <person name="Momiyama H."/>
            <person name="Satoh N."/>
            <person name="Takami S."/>
            <person name="Terashima Y."/>
            <person name="Suzuki O."/>
            <person name="Nakagawa S."/>
            <person name="Senoh A."/>
            <person name="Mizoguchi H."/>
            <person name="Goto Y."/>
            <person name="Shimizu F."/>
            <person name="Wakebe H."/>
            <person name="Hishigaki H."/>
            <person name="Watanabe T."/>
            <person name="Sugiyama A."/>
            <person name="Takemoto M."/>
            <person name="Kawakami B."/>
            <person name="Yamazaki M."/>
            <person name="Watanabe K."/>
            <person name="Kumagai A."/>
            <person name="Itakura S."/>
            <person name="Fukuzumi Y."/>
            <person name="Fujimori Y."/>
            <person name="Komiyama M."/>
            <person name="Tashiro H."/>
            <person name="Tanigami A."/>
            <person name="Fujiwara T."/>
            <person name="Ono T."/>
            <person name="Yamada K."/>
            <person name="Fujii Y."/>
            <person name="Ozaki K."/>
            <person name="Hirao M."/>
            <person name="Ohmori Y."/>
            <person name="Kawabata A."/>
            <person name="Hikiji T."/>
            <person name="Kobatake N."/>
            <person name="Inagaki H."/>
            <person name="Ikema Y."/>
            <person name="Okamoto S."/>
            <person name="Okitani R."/>
            <person name="Kawakami T."/>
            <person name="Noguchi S."/>
            <person name="Itoh T."/>
            <person name="Shigeta K."/>
            <person name="Senba T."/>
            <person name="Matsumura K."/>
            <person name="Nakajima Y."/>
            <person name="Mizuno T."/>
            <person name="Morinaga M."/>
            <person name="Sasaki M."/>
            <person name="Togashi T."/>
            <person name="Oyama M."/>
            <person name="Hata H."/>
            <person name="Watanabe M."/>
            <person name="Komatsu T."/>
            <person name="Mizushima-Sugano J."/>
            <person name="Satoh T."/>
            <person name="Shirai Y."/>
            <person name="Takahashi Y."/>
            <person name="Nakagawa K."/>
            <person name="Okumura K."/>
            <person name="Nagase T."/>
            <person name="Nomura N."/>
            <person name="Kikuchi H."/>
            <person name="Masuho Y."/>
            <person name="Yamashita R."/>
            <person name="Nakai K."/>
            <person name="Yada T."/>
            <person name="Nakamura Y."/>
            <person name="Ohara O."/>
            <person name="Isogai T."/>
            <person name="Sugano S."/>
        </authorList>
    </citation>
    <scope>NUCLEOTIDE SEQUENCE [LARGE SCALE MRNA] (ISOFORMS 1 AND 3)</scope>
    <source>
        <tissue>Skeletal muscle</tissue>
        <tissue>Testis</tissue>
    </source>
</reference>
<reference key="7">
    <citation type="journal article" date="2006" name="Nature">
        <title>The DNA sequence and biological annotation of human chromosome 1.</title>
        <authorList>
            <person name="Gregory S.G."/>
            <person name="Barlow K.F."/>
            <person name="McLay K.E."/>
            <person name="Kaul R."/>
            <person name="Swarbreck D."/>
            <person name="Dunham A."/>
            <person name="Scott C.E."/>
            <person name="Howe K.L."/>
            <person name="Woodfine K."/>
            <person name="Spencer C.C.A."/>
            <person name="Jones M.C."/>
            <person name="Gillson C."/>
            <person name="Searle S."/>
            <person name="Zhou Y."/>
            <person name="Kokocinski F."/>
            <person name="McDonald L."/>
            <person name="Evans R."/>
            <person name="Phillips K."/>
            <person name="Atkinson A."/>
            <person name="Cooper R."/>
            <person name="Jones C."/>
            <person name="Hall R.E."/>
            <person name="Andrews T.D."/>
            <person name="Lloyd C."/>
            <person name="Ainscough R."/>
            <person name="Almeida J.P."/>
            <person name="Ambrose K.D."/>
            <person name="Anderson F."/>
            <person name="Andrew R.W."/>
            <person name="Ashwell R.I.S."/>
            <person name="Aubin K."/>
            <person name="Babbage A.K."/>
            <person name="Bagguley C.L."/>
            <person name="Bailey J."/>
            <person name="Beasley H."/>
            <person name="Bethel G."/>
            <person name="Bird C.P."/>
            <person name="Bray-Allen S."/>
            <person name="Brown J.Y."/>
            <person name="Brown A.J."/>
            <person name="Buckley D."/>
            <person name="Burton J."/>
            <person name="Bye J."/>
            <person name="Carder C."/>
            <person name="Chapman J.C."/>
            <person name="Clark S.Y."/>
            <person name="Clarke G."/>
            <person name="Clee C."/>
            <person name="Cobley V."/>
            <person name="Collier R.E."/>
            <person name="Corby N."/>
            <person name="Coville G.J."/>
            <person name="Davies J."/>
            <person name="Deadman R."/>
            <person name="Dunn M."/>
            <person name="Earthrowl M."/>
            <person name="Ellington A.G."/>
            <person name="Errington H."/>
            <person name="Frankish A."/>
            <person name="Frankland J."/>
            <person name="French L."/>
            <person name="Garner P."/>
            <person name="Garnett J."/>
            <person name="Gay L."/>
            <person name="Ghori M.R.J."/>
            <person name="Gibson R."/>
            <person name="Gilby L.M."/>
            <person name="Gillett W."/>
            <person name="Glithero R.J."/>
            <person name="Grafham D.V."/>
            <person name="Griffiths C."/>
            <person name="Griffiths-Jones S."/>
            <person name="Grocock R."/>
            <person name="Hammond S."/>
            <person name="Harrison E.S.I."/>
            <person name="Hart E."/>
            <person name="Haugen E."/>
            <person name="Heath P.D."/>
            <person name="Holmes S."/>
            <person name="Holt K."/>
            <person name="Howden P.J."/>
            <person name="Hunt A.R."/>
            <person name="Hunt S.E."/>
            <person name="Hunter G."/>
            <person name="Isherwood J."/>
            <person name="James R."/>
            <person name="Johnson C."/>
            <person name="Johnson D."/>
            <person name="Joy A."/>
            <person name="Kay M."/>
            <person name="Kershaw J.K."/>
            <person name="Kibukawa M."/>
            <person name="Kimberley A.M."/>
            <person name="King A."/>
            <person name="Knights A.J."/>
            <person name="Lad H."/>
            <person name="Laird G."/>
            <person name="Lawlor S."/>
            <person name="Leongamornlert D.A."/>
            <person name="Lloyd D.M."/>
            <person name="Loveland J."/>
            <person name="Lovell J."/>
            <person name="Lush M.J."/>
            <person name="Lyne R."/>
            <person name="Martin S."/>
            <person name="Mashreghi-Mohammadi M."/>
            <person name="Matthews L."/>
            <person name="Matthews N.S.W."/>
            <person name="McLaren S."/>
            <person name="Milne S."/>
            <person name="Mistry S."/>
            <person name="Moore M.J.F."/>
            <person name="Nickerson T."/>
            <person name="O'Dell C.N."/>
            <person name="Oliver K."/>
            <person name="Palmeiri A."/>
            <person name="Palmer S.A."/>
            <person name="Parker A."/>
            <person name="Patel D."/>
            <person name="Pearce A.V."/>
            <person name="Peck A.I."/>
            <person name="Pelan S."/>
            <person name="Phelps K."/>
            <person name="Phillimore B.J."/>
            <person name="Plumb R."/>
            <person name="Rajan J."/>
            <person name="Raymond C."/>
            <person name="Rouse G."/>
            <person name="Saenphimmachak C."/>
            <person name="Sehra H.K."/>
            <person name="Sheridan E."/>
            <person name="Shownkeen R."/>
            <person name="Sims S."/>
            <person name="Skuce C.D."/>
            <person name="Smith M."/>
            <person name="Steward C."/>
            <person name="Subramanian S."/>
            <person name="Sycamore N."/>
            <person name="Tracey A."/>
            <person name="Tromans A."/>
            <person name="Van Helmond Z."/>
            <person name="Wall M."/>
            <person name="Wallis J.M."/>
            <person name="White S."/>
            <person name="Whitehead S.L."/>
            <person name="Wilkinson J.E."/>
            <person name="Willey D.L."/>
            <person name="Williams H."/>
            <person name="Wilming L."/>
            <person name="Wray P.W."/>
            <person name="Wu Z."/>
            <person name="Coulson A."/>
            <person name="Vaudin M."/>
            <person name="Sulston J.E."/>
            <person name="Durbin R.M."/>
            <person name="Hubbard T."/>
            <person name="Wooster R."/>
            <person name="Dunham I."/>
            <person name="Carter N.P."/>
            <person name="McVean G."/>
            <person name="Ross M.T."/>
            <person name="Harrow J."/>
            <person name="Olson M.V."/>
            <person name="Beck S."/>
            <person name="Rogers J."/>
            <person name="Bentley D.R."/>
        </authorList>
    </citation>
    <scope>NUCLEOTIDE SEQUENCE [LARGE SCALE GENOMIC DNA]</scope>
</reference>
<reference key="8">
    <citation type="submission" date="2005-07" db="EMBL/GenBank/DDBJ databases">
        <authorList>
            <person name="Mural R.J."/>
            <person name="Istrail S."/>
            <person name="Sutton G."/>
            <person name="Florea L."/>
            <person name="Halpern A.L."/>
            <person name="Mobarry C.M."/>
            <person name="Lippert R."/>
            <person name="Walenz B."/>
            <person name="Shatkay H."/>
            <person name="Dew I."/>
            <person name="Miller J.R."/>
            <person name="Flanigan M.J."/>
            <person name="Edwards N.J."/>
            <person name="Bolanos R."/>
            <person name="Fasulo D."/>
            <person name="Halldorsson B.V."/>
            <person name="Hannenhalli S."/>
            <person name="Turner R."/>
            <person name="Yooseph S."/>
            <person name="Lu F."/>
            <person name="Nusskern D.R."/>
            <person name="Shue B.C."/>
            <person name="Zheng X.H."/>
            <person name="Zhong F."/>
            <person name="Delcher A.L."/>
            <person name="Huson D.H."/>
            <person name="Kravitz S.A."/>
            <person name="Mouchard L."/>
            <person name="Reinert K."/>
            <person name="Remington K.A."/>
            <person name="Clark A.G."/>
            <person name="Waterman M.S."/>
            <person name="Eichler E.E."/>
            <person name="Adams M.D."/>
            <person name="Hunkapiller M.W."/>
            <person name="Myers E.W."/>
            <person name="Venter J.C."/>
        </authorList>
    </citation>
    <scope>NUCLEOTIDE SEQUENCE [LARGE SCALE GENOMIC DNA]</scope>
</reference>
<reference key="9">
    <citation type="journal article" date="2004" name="Genome Res.">
        <title>The status, quality, and expansion of the NIH full-length cDNA project: the Mammalian Gene Collection (MGC).</title>
        <authorList>
            <consortium name="The MGC Project Team"/>
        </authorList>
    </citation>
    <scope>NUCLEOTIDE SEQUENCE [LARGE SCALE MRNA] (ISOFORM 1)</scope>
    <source>
        <tissue>Brain</tissue>
        <tissue>Skin</tissue>
    </source>
</reference>
<reference key="10">
    <citation type="submission" date="2007-07" db="UniProtKB">
        <authorList>
            <person name="Bienvenut W.V."/>
            <person name="Boldt K."/>
            <person name="von Kriegsheim A.F."/>
            <person name="Kolch W."/>
        </authorList>
    </citation>
    <scope>PROTEIN SEQUENCE OF 2-14; 34-41; 112-118 AND 124-143</scope>
    <scope>CLEAVAGE OF INITIATOR METHIONINE</scope>
    <scope>ACETYLATION AT ALA-2</scope>
    <scope>IDENTIFICATION BY MASS SPECTROMETRY</scope>
    <source>
        <tissue>Hepatoma</tissue>
    </source>
</reference>
<reference key="11">
    <citation type="submission" date="2008-03" db="UniProtKB">
        <authorList>
            <person name="Bienvenut W.V."/>
            <person name="Heiserich L."/>
            <person name="Gottlieb E."/>
        </authorList>
    </citation>
    <scope>PROTEIN SEQUENCE OF 2-19 AND 112-118</scope>
    <scope>CLEAVAGE OF INITIATOR METHIONINE</scope>
    <scope>ACETYLATION AT ALA-2</scope>
    <scope>IDENTIFICATION BY MASS SPECTROMETRY</scope>
    <source>
        <tissue>Colon carcinoma</tissue>
    </source>
</reference>
<reference key="12">
    <citation type="journal article" date="2001" name="Mol. Cell">
        <title>Siah-1, SIP, and Ebi collaborate in a novel pathway for beta-catenin degradation linked to p53 responses.</title>
        <authorList>
            <person name="Matsuzawa S."/>
            <person name="Reed J.C."/>
        </authorList>
    </citation>
    <scope>ALTERNATIVE SPLICING (ISOFORM 2)</scope>
    <scope>SUBUNIT OF A COMPLEX WITH UBE2D1; SIAH1; SKP1; APC AND TBL1X</scope>
    <scope>INTERACTION WITH SIAH1; SIAH2 AND SKP1</scope>
</reference>
<reference key="13">
    <citation type="journal article" date="2003" name="J. Biochem. Mol. Biol.">
        <title>Translocation and phosphorylation of calcyclin binding protein during retinoic acid-induced neuronal differentiation of neuroblastoma SH-SY5Y cells.</title>
        <authorList>
            <person name="Wu J."/>
            <person name="Tan X."/>
            <person name="Peng X.Z."/>
            <person name="Yuan J.G."/>
            <person name="Qiang B.Q."/>
        </authorList>
    </citation>
    <scope>SUBCELLULAR LOCATION</scope>
    <scope>PHOSPHORYLATION</scope>
</reference>
<reference key="14">
    <citation type="journal article" date="2009" name="Anal. Chem.">
        <title>Lys-N and trypsin cover complementary parts of the phosphoproteome in a refined SCX-based approach.</title>
        <authorList>
            <person name="Gauci S."/>
            <person name="Helbig A.O."/>
            <person name="Slijper M."/>
            <person name="Krijgsveld J."/>
            <person name="Heck A.J."/>
            <person name="Mohammed S."/>
        </authorList>
    </citation>
    <scope>ACETYLATION [LARGE SCALE ANALYSIS] AT ALA-2</scope>
    <scope>CLEAVAGE OF INITIATOR METHIONINE [LARGE SCALE ANALYSIS]</scope>
    <scope>IDENTIFICATION BY MASS SPECTROMETRY [LARGE SCALE ANALYSIS]</scope>
</reference>
<reference key="15">
    <citation type="journal article" date="2009" name="Sci. Signal.">
        <title>Quantitative phosphoproteomic analysis of T cell receptor signaling reveals system-wide modulation of protein-protein interactions.</title>
        <authorList>
            <person name="Mayya V."/>
            <person name="Lundgren D.H."/>
            <person name="Hwang S.-I."/>
            <person name="Rezaul K."/>
            <person name="Wu L."/>
            <person name="Eng J.K."/>
            <person name="Rodionov V."/>
            <person name="Han D.K."/>
        </authorList>
    </citation>
    <scope>IDENTIFICATION BY MASS SPECTROMETRY [LARGE SCALE ANALYSIS]</scope>
    <source>
        <tissue>Leukemic T-cell</tissue>
    </source>
</reference>
<reference key="16">
    <citation type="journal article" date="2009" name="Science">
        <title>Lysine acetylation targets protein complexes and co-regulates major cellular functions.</title>
        <authorList>
            <person name="Choudhary C."/>
            <person name="Kumar C."/>
            <person name="Gnad F."/>
            <person name="Nielsen M.L."/>
            <person name="Rehman M."/>
            <person name="Walther T.C."/>
            <person name="Olsen J.V."/>
            <person name="Mann M."/>
        </authorList>
    </citation>
    <scope>ACETYLATION [LARGE SCALE ANALYSIS] AT LYS-8; LYS-19; LYS-85 AND LYS-118</scope>
    <scope>IDENTIFICATION BY MASS SPECTROMETRY [LARGE SCALE ANALYSIS]</scope>
</reference>
<reference key="17">
    <citation type="journal article" date="2011" name="BMC Syst. Biol.">
        <title>Initial characterization of the human central proteome.</title>
        <authorList>
            <person name="Burkard T.R."/>
            <person name="Planyavsky M."/>
            <person name="Kaupe I."/>
            <person name="Breitwieser F.P."/>
            <person name="Buerckstuemmer T."/>
            <person name="Bennett K.L."/>
            <person name="Superti-Furga G."/>
            <person name="Colinge J."/>
        </authorList>
    </citation>
    <scope>IDENTIFICATION BY MASS SPECTROMETRY [LARGE SCALE ANALYSIS]</scope>
</reference>
<reference key="18">
    <citation type="journal article" date="2012" name="Mol. Cell. Proteomics">
        <title>Comparative large-scale characterisation of plant vs. mammal proteins reveals similar and idiosyncratic N-alpha acetylation features.</title>
        <authorList>
            <person name="Bienvenut W.V."/>
            <person name="Sumpton D."/>
            <person name="Martinez A."/>
            <person name="Lilla S."/>
            <person name="Espagne C."/>
            <person name="Meinnel T."/>
            <person name="Giglione C."/>
        </authorList>
    </citation>
    <scope>ACETYLATION [LARGE SCALE ANALYSIS] AT ALA-2</scope>
    <scope>CLEAVAGE OF INITIATOR METHIONINE [LARGE SCALE ANALYSIS]</scope>
    <scope>IDENTIFICATION BY MASS SPECTROMETRY [LARGE SCALE ANALYSIS]</scope>
</reference>
<reference key="19">
    <citation type="journal article" date="2012" name="Proc. Natl. Acad. Sci. U.S.A.">
        <title>N-terminal acetylome analyses and functional insights of the N-terminal acetyltransferase NatB.</title>
        <authorList>
            <person name="Van Damme P."/>
            <person name="Lasa M."/>
            <person name="Polevoda B."/>
            <person name="Gazquez C."/>
            <person name="Elosegui-Artola A."/>
            <person name="Kim D.S."/>
            <person name="De Juan-Pardo E."/>
            <person name="Demeyer K."/>
            <person name="Hole K."/>
            <person name="Larrea E."/>
            <person name="Timmerman E."/>
            <person name="Prieto J."/>
            <person name="Arnesen T."/>
            <person name="Sherman F."/>
            <person name="Gevaert K."/>
            <person name="Aldabe R."/>
        </authorList>
    </citation>
    <scope>ACETYLATION [LARGE SCALE ANALYSIS] AT ALA-2</scope>
    <scope>CLEAVAGE OF INITIATOR METHIONINE [LARGE SCALE ANALYSIS]</scope>
    <scope>IDENTIFICATION BY MASS SPECTROMETRY [LARGE SCALE ANALYSIS]</scope>
</reference>
<reference key="20">
    <citation type="journal article" date="2013" name="J. Proteome Res.">
        <title>Toward a comprehensive characterization of a human cancer cell phosphoproteome.</title>
        <authorList>
            <person name="Zhou H."/>
            <person name="Di Palma S."/>
            <person name="Preisinger C."/>
            <person name="Peng M."/>
            <person name="Polat A.N."/>
            <person name="Heck A.J."/>
            <person name="Mohammed S."/>
        </authorList>
    </citation>
    <scope>PHOSPHORYLATION [LARGE SCALE ANALYSIS] AT SER-3 AND SER-34</scope>
    <scope>IDENTIFICATION BY MASS SPECTROMETRY [LARGE SCALE ANALYSIS]</scope>
    <source>
        <tissue>Cervix carcinoma</tissue>
        <tissue>Erythroleukemia</tissue>
    </source>
</reference>
<reference key="21">
    <citation type="journal article" date="2015" name="Proteomics">
        <title>N-terminome analysis of the human mitochondrial proteome.</title>
        <authorList>
            <person name="Vaca Jacome A.S."/>
            <person name="Rabilloud T."/>
            <person name="Schaeffer-Reiss C."/>
            <person name="Rompais M."/>
            <person name="Ayoub D."/>
            <person name="Lane L."/>
            <person name="Bairoch A."/>
            <person name="Van Dorsselaer A."/>
            <person name="Carapito C."/>
        </authorList>
    </citation>
    <scope>ACETYLATION [LARGE SCALE ANALYSIS] AT ALA-2</scope>
    <scope>CLEAVAGE OF INITIATOR METHIONINE [LARGE SCALE ANALYSIS]</scope>
    <scope>IDENTIFICATION BY MASS SPECTROMETRY [LARGE SCALE ANALYSIS]</scope>
</reference>
<reference key="22">
    <citation type="journal article" date="2023" name="Life. Sci Alliance">
        <title>N-terminal proteoforms may engage in different protein complexes.</title>
        <authorList>
            <person name="Bogaert A."/>
            <person name="Fijalkowska D."/>
            <person name="Staes A."/>
            <person name="Van de Steene T."/>
            <person name="Vuylsteke M."/>
            <person name="Stadler C."/>
            <person name="Eyckerman S."/>
            <person name="Spirohn K."/>
            <person name="Hao T."/>
            <person name="Calderwood M.A."/>
            <person name="Gevaert K."/>
        </authorList>
    </citation>
    <scope>CLEAVAGE OF INITIATOR METHIONINE (ISOFORM 1)</scope>
    <scope>ACETYLATION AT ALA-2 (ISOFORM 1)</scope>
    <scope>ACETYLATION AT MET-1 (ISOFORM 3)</scope>
</reference>
<reference key="23">
    <citation type="journal article" date="2005" name="J. Biol. Chem.">
        <title>Structural analysis of Siah1-Siah-interacting protein interactions and insights into the assembly of an E3 ligase multiprotein complex.</title>
        <authorList>
            <person name="Santelli E."/>
            <person name="Leone M."/>
            <person name="Li C."/>
            <person name="Fukushima T."/>
            <person name="Preece N.E."/>
            <person name="Olson A.J."/>
            <person name="Ely K.R."/>
            <person name="Reed J.C."/>
            <person name="Pellecchia M."/>
            <person name="Liddington R.C."/>
            <person name="Matsuzawa S."/>
        </authorList>
    </citation>
    <scope>X-RAY CRYSTALLOGRAPHY (1.2 ANGSTROMS) OF 1-70</scope>
    <scope>SUBUNIT</scope>
    <scope>MUTAGENESIS OF 23-LYS--ARG-26; VAL-64 AND PRO-66</scope>
    <scope>FUNCTION</scope>
    <scope>INTERACTION WITH SIAH1</scope>
</reference>
<reference key="24">
    <citation type="submission" date="2005-11" db="PDB data bank">
        <title>Solution structure of the core domain of calcyclin binding protein; SIAH-interacting protein (SIP).</title>
        <authorList>
            <consortium name="RIKEN structural genomics initiative (RSGI)"/>
        </authorList>
    </citation>
    <scope>STRUCTURE BY NMR OF 63-176</scope>
</reference>
<comment type="function">
    <text evidence="6">May be involved in calcium-dependent ubiquitination and subsequent proteasomal degradation of target proteins. Probably serves as a molecular bridge in ubiquitin E3 complexes. Participates in the ubiquitin-mediated degradation of beta-catenin (CTNNB1).</text>
</comment>
<comment type="subunit">
    <text evidence="1 4 6">Homodimer. Interacts with proteins of the S100 family S100A1, S100A6, S100B, S100P and S100A12 in a calcium-dependent manner (By similarity). Component of some large E3 complex at least composed of UBE2D1, SIAH1, CACYBP/SIP, SKP1, APC and TBL1X. Interacts directly with SIAH1, SIAH2 and SKP1.</text>
</comment>
<comment type="interaction">
    <interactant intactId="EBI-1047302">
        <id>Q9HB71</id>
    </interactant>
    <interactant intactId="EBI-641062">
        <id>P04626</id>
        <label>ERBB2</label>
    </interactant>
    <organismsDiffer>false</organismsDiffer>
    <experiments>2</experiments>
</comment>
<comment type="interaction">
    <interactant intactId="EBI-1047302">
        <id>Q9HB71</id>
    </interactant>
    <interactant intactId="EBI-717058">
        <id>P26447</id>
        <label>S100A4</label>
    </interactant>
    <organismsDiffer>false</organismsDiffer>
    <experiments>2</experiments>
</comment>
<comment type="interaction">
    <interactant intactId="EBI-1047302">
        <id>Q9HB71</id>
    </interactant>
    <interactant intactId="EBI-7211732">
        <id>P33763</id>
        <label>S100A5</label>
    </interactant>
    <organismsDiffer>false</organismsDiffer>
    <experiments>3</experiments>
</comment>
<comment type="interaction">
    <interactant intactId="EBI-1047302">
        <id>Q9HB71</id>
    </interactant>
    <interactant intactId="EBI-352877">
        <id>P06703</id>
        <label>S100A6</label>
    </interactant>
    <organismsDiffer>false</organismsDiffer>
    <experiments>3</experiments>
</comment>
<comment type="subcellular location">
    <subcellularLocation>
        <location evidence="5">Nucleus</location>
    </subcellularLocation>
    <subcellularLocation>
        <location evidence="5">Cytoplasm</location>
    </subcellularLocation>
    <text>Cytoplasmic at low calcium concentrations. In neuroblastoma cells, after a retinoic acid (RA) induction and calcium increase, it localizes in both the nucleus and cytoplasm. The nuclear fraction may be phosphorylated.</text>
</comment>
<comment type="alternative products">
    <event type="alternative splicing"/>
    <isoform>
        <id>Q9HB71-1</id>
        <name>1</name>
        <sequence type="displayed"/>
    </isoform>
    <isoform>
        <id>Q9HB71-2</id>
        <name>2</name>
        <name>SIP-S</name>
        <name>S</name>
        <sequence type="described" ref="VSP_010171 VSP_010172"/>
    </isoform>
    <isoform>
        <id>Q9HB71-3</id>
        <name>3</name>
        <sequence type="described" ref="VSP_046862"/>
    </isoform>
</comment>
<comment type="PTM">
    <text evidence="5">Phosphorylated on serine residues. Phosphorylated upon induction by RA or at high calcium concentrations.</text>
</comment>
<comment type="sequence caution" evidence="11">
    <conflict type="frameshift">
        <sequence resource="EMBL-CDS" id="AAG23817"/>
    </conflict>
</comment>
<comment type="sequence caution" evidence="11">
    <conflict type="frameshift">
        <sequence resource="EMBL-CDS" id="BAG52713"/>
    </conflict>
</comment>
<protein>
    <recommendedName>
        <fullName>Calcyclin-binding protein</fullName>
        <shortName>CacyBP</shortName>
        <shortName>hCacyBP</shortName>
    </recommendedName>
    <alternativeName>
        <fullName>S100A6-binding protein</fullName>
    </alternativeName>
    <alternativeName>
        <fullName>Siah-interacting protein</fullName>
    </alternativeName>
</protein>
<name>CYBP_HUMAN</name>
<keyword id="KW-0002">3D-structure</keyword>
<keyword id="KW-0007">Acetylation</keyword>
<keyword id="KW-0025">Alternative splicing</keyword>
<keyword id="KW-0963">Cytoplasm</keyword>
<keyword id="KW-0903">Direct protein sequencing</keyword>
<keyword id="KW-0539">Nucleus</keyword>
<keyword id="KW-0597">Phosphoprotein</keyword>
<keyword id="KW-1267">Proteomics identification</keyword>
<keyword id="KW-1185">Reference proteome</keyword>
<keyword id="KW-0833">Ubl conjugation pathway</keyword>